<evidence type="ECO:0000255" key="1"/>
<evidence type="ECO:0000269" key="2">
    <source>
    </source>
</evidence>
<evidence type="ECO:0000303" key="3">
    <source>
    </source>
</evidence>
<evidence type="ECO:0000305" key="4"/>
<evidence type="ECO:0000305" key="5">
    <source>
    </source>
</evidence>
<proteinExistence type="inferred from homology"/>
<name>SFI6_PHYIT</name>
<dbReference type="EMBL" id="DS028147">
    <property type="protein sequence ID" value="EEY61979.1"/>
    <property type="molecule type" value="Genomic_DNA"/>
</dbReference>
<dbReference type="RefSeq" id="XP_002899619.1">
    <property type="nucleotide sequence ID" value="XM_002899573.1"/>
</dbReference>
<dbReference type="STRING" id="403677.D0NN72"/>
<dbReference type="EnsemblProtists" id="PITG_13959T0">
    <property type="protein sequence ID" value="PITG_13959T0"/>
    <property type="gene ID" value="PITG_13959"/>
</dbReference>
<dbReference type="GeneID" id="9461650"/>
<dbReference type="KEGG" id="pif:PITG_13959"/>
<dbReference type="VEuPathDB" id="FungiDB:PITG_13959"/>
<dbReference type="eggNOG" id="ENOG502RGY9">
    <property type="taxonomic scope" value="Eukaryota"/>
</dbReference>
<dbReference type="HOGENOM" id="CLU_1790698_0_0_1"/>
<dbReference type="InParanoid" id="D0NN72"/>
<dbReference type="OMA" id="YRDKEFQ"/>
<dbReference type="OrthoDB" id="125806at2759"/>
<dbReference type="PHI-base" id="PHI:4205"/>
<dbReference type="Proteomes" id="UP000006643">
    <property type="component" value="Partially assembled WGS sequence"/>
</dbReference>
<dbReference type="GO" id="GO:0005576">
    <property type="term" value="C:extracellular region"/>
    <property type="evidence" value="ECO:0007669"/>
    <property type="project" value="UniProtKB-SubCell"/>
</dbReference>
<dbReference type="GO" id="GO:0030430">
    <property type="term" value="C:host cell cytoplasm"/>
    <property type="evidence" value="ECO:0007669"/>
    <property type="project" value="UniProtKB-SubCell"/>
</dbReference>
<dbReference type="GO" id="GO:0020002">
    <property type="term" value="C:host cell plasma membrane"/>
    <property type="evidence" value="ECO:0007669"/>
    <property type="project" value="UniProtKB-SubCell"/>
</dbReference>
<dbReference type="GO" id="GO:0016020">
    <property type="term" value="C:membrane"/>
    <property type="evidence" value="ECO:0007669"/>
    <property type="project" value="UniProtKB-KW"/>
</dbReference>
<dbReference type="InterPro" id="IPR031825">
    <property type="entry name" value="RXLR"/>
</dbReference>
<dbReference type="Pfam" id="PF16810">
    <property type="entry name" value="RXLR"/>
    <property type="match status" value="1"/>
</dbReference>
<feature type="signal peptide" evidence="1">
    <location>
        <begin position="1"/>
        <end position="16"/>
    </location>
</feature>
<feature type="chain" id="PRO_5003012234" description="RxLR effector protein SFI6">
    <location>
        <begin position="17"/>
        <end position="129"/>
    </location>
</feature>
<feature type="short sequence motif" description="RxLR-dEER" evidence="5">
    <location>
        <begin position="42"/>
        <end position="64"/>
    </location>
</feature>
<keyword id="KW-1032">Host cell membrane</keyword>
<keyword id="KW-1035">Host cytoplasm</keyword>
<keyword id="KW-1043">Host membrane</keyword>
<keyword id="KW-0472">Membrane</keyword>
<keyword id="KW-1185">Reference proteome</keyword>
<keyword id="KW-0964">Secreted</keyword>
<keyword id="KW-0732">Signal</keyword>
<accession>D0NN72</accession>
<comment type="function">
    <text evidence="2">Effector that suppresses flg22-induced post-translational MAP kinase activation in tomato but not in Arabidopsis. The perception of highly conserved pathogen- or microbe-associated molecular patterns (PAMPs/MAMPs), such as flg22, triggers converging signaling pathways recruiting MAP kinase cascades and inducing transcriptional re-programming, yielding a generic antimicrobial response.</text>
</comment>
<comment type="subcellular location">
    <subcellularLocation>
        <location evidence="2">Secreted</location>
    </subcellularLocation>
    <subcellularLocation>
        <location evidence="2">Host cytoplasm</location>
    </subcellularLocation>
    <subcellularLocation>
        <location evidence="2">Host cell membrane</location>
    </subcellularLocation>
</comment>
<comment type="domain">
    <text evidence="5">The RxLR-dEER motif acts to carry the protein into the host cell cytoplasm through binding to cell surface phosphatidylinositol-3-phosphate.</text>
</comment>
<comment type="similarity">
    <text evidence="4">Belongs to the RxLR effector family.</text>
</comment>
<gene>
    <name evidence="3" type="primary">SFI6</name>
    <name type="ORF">PITG_13959</name>
</gene>
<organism>
    <name type="scientific">Phytophthora infestans (strain T30-4)</name>
    <name type="common">Potato late blight agent</name>
    <dbReference type="NCBI Taxonomy" id="403677"/>
    <lineage>
        <taxon>Eukaryota</taxon>
        <taxon>Sar</taxon>
        <taxon>Stramenopiles</taxon>
        <taxon>Oomycota</taxon>
        <taxon>Peronosporales</taxon>
        <taxon>Peronosporaceae</taxon>
        <taxon>Phytophthora</taxon>
    </lineage>
</organism>
<sequence>MTLVVLATGLLASGTAVSNADQASELNVDVHSSNVLATEDTRFLRSHQITDDKVEINEHGEEERMSGSNLFSALKLEKMGRDTSYRDKEFQRWKNYGNSVGDVTPHVPVSLKEAYATYLRIREMVLVND</sequence>
<reference key="1">
    <citation type="journal article" date="2009" name="Nature">
        <title>Genome sequence and analysis of the Irish potato famine pathogen Phytophthora infestans.</title>
        <authorList>
            <consortium name="The Broad Institute Genome Sequencing Platform"/>
            <person name="Haas B.J."/>
            <person name="Kamoun S."/>
            <person name="Zody M.C."/>
            <person name="Jiang R.H."/>
            <person name="Handsaker R.E."/>
            <person name="Cano L.M."/>
            <person name="Grabherr M."/>
            <person name="Kodira C.D."/>
            <person name="Raffaele S."/>
            <person name="Torto-Alalibo T."/>
            <person name="Bozkurt T.O."/>
            <person name="Ah-Fong A.M."/>
            <person name="Alvarado L."/>
            <person name="Anderson V.L."/>
            <person name="Armstrong M.R."/>
            <person name="Avrova A."/>
            <person name="Baxter L."/>
            <person name="Beynon J."/>
            <person name="Boevink P.C."/>
            <person name="Bollmann S.R."/>
            <person name="Bos J.I."/>
            <person name="Bulone V."/>
            <person name="Cai G."/>
            <person name="Cakir C."/>
            <person name="Carrington J.C."/>
            <person name="Chawner M."/>
            <person name="Conti L."/>
            <person name="Costanzo S."/>
            <person name="Ewan R."/>
            <person name="Fahlgren N."/>
            <person name="Fischbach M.A."/>
            <person name="Fugelstad J."/>
            <person name="Gilroy E.M."/>
            <person name="Gnerre S."/>
            <person name="Green P.J."/>
            <person name="Grenville-Briggs L.J."/>
            <person name="Griffith J."/>
            <person name="Grunwald N.J."/>
            <person name="Horn K."/>
            <person name="Horner N.R."/>
            <person name="Hu C.H."/>
            <person name="Huitema E."/>
            <person name="Jeong D.H."/>
            <person name="Jones A.M."/>
            <person name="Jones J.D."/>
            <person name="Jones R.W."/>
            <person name="Karlsson E.K."/>
            <person name="Kunjeti S.G."/>
            <person name="Lamour K."/>
            <person name="Liu Z."/>
            <person name="Ma L."/>
            <person name="Maclean D."/>
            <person name="Chibucos M.C."/>
            <person name="McDonald H."/>
            <person name="McWalters J."/>
            <person name="Meijer H.J."/>
            <person name="Morgan W."/>
            <person name="Morris P.F."/>
            <person name="Munro C.A."/>
            <person name="O'Neill K."/>
            <person name="Ospina-Giraldo M."/>
            <person name="Pinzon A."/>
            <person name="Pritchard L."/>
            <person name="Ramsahoye B."/>
            <person name="Ren Q."/>
            <person name="Restrepo S."/>
            <person name="Roy S."/>
            <person name="Sadanandom A."/>
            <person name="Savidor A."/>
            <person name="Schornack S."/>
            <person name="Schwartz D.C."/>
            <person name="Schumann U.D."/>
            <person name="Schwessinger B."/>
            <person name="Seyer L."/>
            <person name="Sharpe T."/>
            <person name="Silvar C."/>
            <person name="Song J."/>
            <person name="Studholme D.J."/>
            <person name="Sykes S."/>
            <person name="Thines M."/>
            <person name="van de Vondervoort P.J."/>
            <person name="Phuntumart V."/>
            <person name="Wawra S."/>
            <person name="Weide R."/>
            <person name="Win J."/>
            <person name="Young C."/>
            <person name="Zhou S."/>
            <person name="Fry W."/>
            <person name="Meyers B.C."/>
            <person name="van West P."/>
            <person name="Ristaino J."/>
            <person name="Govers F."/>
            <person name="Birch P.R."/>
            <person name="Whisson S.C."/>
            <person name="Judelson H.S."/>
            <person name="Nusbaum C."/>
        </authorList>
    </citation>
    <scope>NUCLEOTIDE SEQUENCE [LARGE SCALE GENOMIC DNA]</scope>
    <source>
        <strain>T30-4</strain>
    </source>
</reference>
<reference key="2">
    <citation type="journal article" date="2014" name="PLoS Pathog.">
        <title>Functionally redundant RXLR effectors from Phytophthora infestans act at different steps to suppress early flg22-triggered immunity.</title>
        <authorList>
            <person name="Zheng X."/>
            <person name="McLellan H."/>
            <person name="Fraiture M."/>
            <person name="Liu X."/>
            <person name="Boevink P.C."/>
            <person name="Gilroy E.M."/>
            <person name="Chen Y."/>
            <person name="Kandel K."/>
            <person name="Sessa G."/>
            <person name="Birch P.R."/>
            <person name="Brunner F."/>
        </authorList>
    </citation>
    <scope>FUNCTION</scope>
    <scope>SUBCELLULAR LOCATION</scope>
</reference>
<protein>
    <recommendedName>
        <fullName evidence="3">RxLR effector protein SFI6</fullName>
    </recommendedName>
    <alternativeName>
        <fullName evidence="3">Suppressor of early Flg22-induced immune response 6</fullName>
    </alternativeName>
</protein>